<protein>
    <recommendedName>
        <fullName evidence="1">Inner membrane-spanning protein YciB</fullName>
    </recommendedName>
</protein>
<comment type="function">
    <text evidence="1">Plays a role in cell envelope biogenesis, maintenance of cell envelope integrity and membrane homeostasis.</text>
</comment>
<comment type="subcellular location">
    <subcellularLocation>
        <location evidence="1">Cell inner membrane</location>
        <topology evidence="1">Multi-pass membrane protein</topology>
    </subcellularLocation>
</comment>
<comment type="similarity">
    <text evidence="1">Belongs to the YciB family.</text>
</comment>
<proteinExistence type="inferred from homology"/>
<feature type="chain" id="PRO_1000098879" description="Inner membrane-spanning protein YciB">
    <location>
        <begin position="1"/>
        <end position="199"/>
    </location>
</feature>
<feature type="transmembrane region" description="Helical" evidence="1">
    <location>
        <begin position="3"/>
        <end position="23"/>
    </location>
</feature>
<feature type="transmembrane region" description="Helical" evidence="1">
    <location>
        <begin position="47"/>
        <end position="67"/>
    </location>
</feature>
<feature type="transmembrane region" description="Helical" evidence="1">
    <location>
        <begin position="76"/>
        <end position="96"/>
    </location>
</feature>
<feature type="transmembrane region" description="Helical" evidence="1">
    <location>
        <begin position="119"/>
        <end position="139"/>
    </location>
</feature>
<feature type="transmembrane region" description="Helical" evidence="1">
    <location>
        <begin position="149"/>
        <end position="169"/>
    </location>
</feature>
<feature type="region of interest" description="Disordered" evidence="2">
    <location>
        <begin position="180"/>
        <end position="199"/>
    </location>
</feature>
<evidence type="ECO:0000255" key="1">
    <source>
        <dbReference type="HAMAP-Rule" id="MF_00189"/>
    </source>
</evidence>
<evidence type="ECO:0000256" key="2">
    <source>
        <dbReference type="SAM" id="MobiDB-lite"/>
    </source>
</evidence>
<dbReference type="EMBL" id="CP000884">
    <property type="protein sequence ID" value="ABX35938.1"/>
    <property type="molecule type" value="Genomic_DNA"/>
</dbReference>
<dbReference type="RefSeq" id="WP_012205138.1">
    <property type="nucleotide sequence ID" value="NC_010002.1"/>
</dbReference>
<dbReference type="STRING" id="398578.Daci_3300"/>
<dbReference type="GeneID" id="24119584"/>
<dbReference type="KEGG" id="dac:Daci_3300"/>
<dbReference type="eggNOG" id="COG2917">
    <property type="taxonomic scope" value="Bacteria"/>
</dbReference>
<dbReference type="HOGENOM" id="CLU_089554_2_0_4"/>
<dbReference type="Proteomes" id="UP000000784">
    <property type="component" value="Chromosome"/>
</dbReference>
<dbReference type="GO" id="GO:0005886">
    <property type="term" value="C:plasma membrane"/>
    <property type="evidence" value="ECO:0007669"/>
    <property type="project" value="UniProtKB-SubCell"/>
</dbReference>
<dbReference type="HAMAP" id="MF_00189">
    <property type="entry name" value="YciB"/>
    <property type="match status" value="1"/>
</dbReference>
<dbReference type="InterPro" id="IPR006008">
    <property type="entry name" value="YciB"/>
</dbReference>
<dbReference type="NCBIfam" id="TIGR00997">
    <property type="entry name" value="ispZ"/>
    <property type="match status" value="1"/>
</dbReference>
<dbReference type="NCBIfam" id="NF001325">
    <property type="entry name" value="PRK00259.1-3"/>
    <property type="match status" value="1"/>
</dbReference>
<dbReference type="PANTHER" id="PTHR36917:SF1">
    <property type="entry name" value="INNER MEMBRANE-SPANNING PROTEIN YCIB"/>
    <property type="match status" value="1"/>
</dbReference>
<dbReference type="PANTHER" id="PTHR36917">
    <property type="entry name" value="INTRACELLULAR SEPTATION PROTEIN A-RELATED"/>
    <property type="match status" value="1"/>
</dbReference>
<dbReference type="Pfam" id="PF04279">
    <property type="entry name" value="IspA"/>
    <property type="match status" value="1"/>
</dbReference>
<gene>
    <name evidence="1" type="primary">yciB</name>
    <name type="ordered locus">Daci_3300</name>
</gene>
<reference key="1">
    <citation type="submission" date="2007-11" db="EMBL/GenBank/DDBJ databases">
        <title>Complete sequence of Delftia acidovorans DSM 14801 / SPH-1.</title>
        <authorList>
            <person name="Copeland A."/>
            <person name="Lucas S."/>
            <person name="Lapidus A."/>
            <person name="Barry K."/>
            <person name="Glavina del Rio T."/>
            <person name="Dalin E."/>
            <person name="Tice H."/>
            <person name="Pitluck S."/>
            <person name="Lowry S."/>
            <person name="Clum A."/>
            <person name="Schmutz J."/>
            <person name="Larimer F."/>
            <person name="Land M."/>
            <person name="Hauser L."/>
            <person name="Kyrpides N."/>
            <person name="Kim E."/>
            <person name="Schleheck D."/>
            <person name="Richardson P."/>
        </authorList>
    </citation>
    <scope>NUCLEOTIDE SEQUENCE [LARGE SCALE GENOMIC DNA]</scope>
    <source>
        <strain>DSM 14801 / SPH-1</strain>
    </source>
</reference>
<sequence>MKLLIDFFPIILFFVAFKVWGIYTATAVAIVATIAQIAYLRVRHGKVEPMQWVSLGVIVLFGGATLLAHNDTFIKWKPSVLYWLMGSALLIGQLVFRKNLLRSVMGAQLQLPDNAWRTLNWSWAAFFAVMGALNLVIAYRFDTDTWVNFKLFGGMGLMLVFVIGQAIYMSRFMQEDKGEAAAATPDALPPPGVQQDKQP</sequence>
<accession>A9BZN0</accession>
<name>YCIB_DELAS</name>
<keyword id="KW-0997">Cell inner membrane</keyword>
<keyword id="KW-1003">Cell membrane</keyword>
<keyword id="KW-0472">Membrane</keyword>
<keyword id="KW-1185">Reference proteome</keyword>
<keyword id="KW-0812">Transmembrane</keyword>
<keyword id="KW-1133">Transmembrane helix</keyword>
<organism>
    <name type="scientific">Delftia acidovorans (strain DSM 14801 / SPH-1)</name>
    <dbReference type="NCBI Taxonomy" id="398578"/>
    <lineage>
        <taxon>Bacteria</taxon>
        <taxon>Pseudomonadati</taxon>
        <taxon>Pseudomonadota</taxon>
        <taxon>Betaproteobacteria</taxon>
        <taxon>Burkholderiales</taxon>
        <taxon>Comamonadaceae</taxon>
        <taxon>Delftia</taxon>
    </lineage>
</organism>